<keyword id="KW-0963">Cytoplasm</keyword>
<keyword id="KW-0507">mRNA processing</keyword>
<keyword id="KW-0508">mRNA splicing</keyword>
<keyword id="KW-0539">Nucleus</keyword>
<keyword id="KW-1185">Reference proteome</keyword>
<keyword id="KW-0747">Spliceosome</keyword>
<dbReference type="EMBL" id="AAHF01000003">
    <property type="protein sequence ID" value="EAL91730.1"/>
    <property type="molecule type" value="Genomic_DNA"/>
</dbReference>
<dbReference type="RefSeq" id="XP_753768.1">
    <property type="nucleotide sequence ID" value="XM_748675.1"/>
</dbReference>
<dbReference type="SMR" id="Q4WUJ6"/>
<dbReference type="FunCoup" id="Q4WUJ6">
    <property type="interactions" value="214"/>
</dbReference>
<dbReference type="STRING" id="330879.Q4WUJ6"/>
<dbReference type="EnsemblFungi" id="EAL91730">
    <property type="protein sequence ID" value="EAL91730"/>
    <property type="gene ID" value="AFUA_5G08690"/>
</dbReference>
<dbReference type="GeneID" id="3511623"/>
<dbReference type="KEGG" id="afm:AFUA_5G08690"/>
<dbReference type="VEuPathDB" id="FungiDB:Afu5g08690"/>
<dbReference type="eggNOG" id="KOG3068">
    <property type="taxonomic scope" value="Eukaryota"/>
</dbReference>
<dbReference type="HOGENOM" id="CLU_043453_2_0_1"/>
<dbReference type="InParanoid" id="Q4WUJ6"/>
<dbReference type="OMA" id="YHWERRI"/>
<dbReference type="OrthoDB" id="1739576at2759"/>
<dbReference type="Proteomes" id="UP000002530">
    <property type="component" value="Chromosome 5"/>
</dbReference>
<dbReference type="GO" id="GO:0071013">
    <property type="term" value="C:catalytic step 2 spliceosome"/>
    <property type="evidence" value="ECO:0000318"/>
    <property type="project" value="GO_Central"/>
</dbReference>
<dbReference type="GO" id="GO:0005737">
    <property type="term" value="C:cytoplasm"/>
    <property type="evidence" value="ECO:0007669"/>
    <property type="project" value="UniProtKB-SubCell"/>
</dbReference>
<dbReference type="GO" id="GO:0071014">
    <property type="term" value="C:post-mRNA release spliceosomal complex"/>
    <property type="evidence" value="ECO:0000318"/>
    <property type="project" value="GO_Central"/>
</dbReference>
<dbReference type="GO" id="GO:0071020">
    <property type="term" value="C:post-spliceosomal complex"/>
    <property type="evidence" value="ECO:0000318"/>
    <property type="project" value="GO_Central"/>
</dbReference>
<dbReference type="GO" id="GO:0000974">
    <property type="term" value="C:Prp19 complex"/>
    <property type="evidence" value="ECO:0000318"/>
    <property type="project" value="GO_Central"/>
</dbReference>
<dbReference type="GO" id="GO:0000350">
    <property type="term" value="P:generation of catalytic spliceosome for second transesterification step"/>
    <property type="evidence" value="ECO:0000318"/>
    <property type="project" value="GO_Central"/>
</dbReference>
<dbReference type="GO" id="GO:0000389">
    <property type="term" value="P:mRNA 3'-splice site recognition"/>
    <property type="evidence" value="ECO:0000318"/>
    <property type="project" value="GO_Central"/>
</dbReference>
<dbReference type="FunFam" id="1.10.287.660:FF:000001">
    <property type="entry name" value="pre-mRNA-splicing factor ISY1 homolog"/>
    <property type="match status" value="1"/>
</dbReference>
<dbReference type="Gene3D" id="1.10.287.660">
    <property type="entry name" value="Helix hairpin bin"/>
    <property type="match status" value="1"/>
</dbReference>
<dbReference type="InterPro" id="IPR029012">
    <property type="entry name" value="Helix_hairpin_bin_sf"/>
</dbReference>
<dbReference type="InterPro" id="IPR009360">
    <property type="entry name" value="Isy1"/>
</dbReference>
<dbReference type="InterPro" id="IPR037200">
    <property type="entry name" value="Isy1_sf"/>
</dbReference>
<dbReference type="PANTHER" id="PTHR13021">
    <property type="entry name" value="PRE-MRNA-SPLICING FACTOR ISY1"/>
    <property type="match status" value="1"/>
</dbReference>
<dbReference type="Pfam" id="PF06246">
    <property type="entry name" value="Isy1"/>
    <property type="match status" value="1"/>
</dbReference>
<dbReference type="SUPFAM" id="SSF140102">
    <property type="entry name" value="ISY1 domain-like"/>
    <property type="match status" value="1"/>
</dbReference>
<organism>
    <name type="scientific">Aspergillus fumigatus (strain ATCC MYA-4609 / CBS 101355 / FGSC A1100 / Af293)</name>
    <name type="common">Neosartorya fumigata</name>
    <dbReference type="NCBI Taxonomy" id="330879"/>
    <lineage>
        <taxon>Eukaryota</taxon>
        <taxon>Fungi</taxon>
        <taxon>Dikarya</taxon>
        <taxon>Ascomycota</taxon>
        <taxon>Pezizomycotina</taxon>
        <taxon>Eurotiomycetes</taxon>
        <taxon>Eurotiomycetidae</taxon>
        <taxon>Eurotiales</taxon>
        <taxon>Aspergillaceae</taxon>
        <taxon>Aspergillus</taxon>
        <taxon>Aspergillus subgen. Fumigati</taxon>
    </lineage>
</organism>
<reference key="1">
    <citation type="journal article" date="2005" name="Nature">
        <title>Genomic sequence of the pathogenic and allergenic filamentous fungus Aspergillus fumigatus.</title>
        <authorList>
            <person name="Nierman W.C."/>
            <person name="Pain A."/>
            <person name="Anderson M.J."/>
            <person name="Wortman J.R."/>
            <person name="Kim H.S."/>
            <person name="Arroyo J."/>
            <person name="Berriman M."/>
            <person name="Abe K."/>
            <person name="Archer D.B."/>
            <person name="Bermejo C."/>
            <person name="Bennett J.W."/>
            <person name="Bowyer P."/>
            <person name="Chen D."/>
            <person name="Collins M."/>
            <person name="Coulsen R."/>
            <person name="Davies R."/>
            <person name="Dyer P.S."/>
            <person name="Farman M.L."/>
            <person name="Fedorova N."/>
            <person name="Fedorova N.D."/>
            <person name="Feldblyum T.V."/>
            <person name="Fischer R."/>
            <person name="Fosker N."/>
            <person name="Fraser A."/>
            <person name="Garcia J.L."/>
            <person name="Garcia M.J."/>
            <person name="Goble A."/>
            <person name="Goldman G.H."/>
            <person name="Gomi K."/>
            <person name="Griffith-Jones S."/>
            <person name="Gwilliam R."/>
            <person name="Haas B.J."/>
            <person name="Haas H."/>
            <person name="Harris D.E."/>
            <person name="Horiuchi H."/>
            <person name="Huang J."/>
            <person name="Humphray S."/>
            <person name="Jimenez J."/>
            <person name="Keller N."/>
            <person name="Khouri H."/>
            <person name="Kitamoto K."/>
            <person name="Kobayashi T."/>
            <person name="Konzack S."/>
            <person name="Kulkarni R."/>
            <person name="Kumagai T."/>
            <person name="Lafton A."/>
            <person name="Latge J.-P."/>
            <person name="Li W."/>
            <person name="Lord A."/>
            <person name="Lu C."/>
            <person name="Majoros W.H."/>
            <person name="May G.S."/>
            <person name="Miller B.L."/>
            <person name="Mohamoud Y."/>
            <person name="Molina M."/>
            <person name="Monod M."/>
            <person name="Mouyna I."/>
            <person name="Mulligan S."/>
            <person name="Murphy L.D."/>
            <person name="O'Neil S."/>
            <person name="Paulsen I."/>
            <person name="Penalva M.A."/>
            <person name="Pertea M."/>
            <person name="Price C."/>
            <person name="Pritchard B.L."/>
            <person name="Quail M.A."/>
            <person name="Rabbinowitsch E."/>
            <person name="Rawlins N."/>
            <person name="Rajandream M.A."/>
            <person name="Reichard U."/>
            <person name="Renauld H."/>
            <person name="Robson G.D."/>
            <person name="Rodriguez de Cordoba S."/>
            <person name="Rodriguez-Pena J.M."/>
            <person name="Ronning C.M."/>
            <person name="Rutter S."/>
            <person name="Salzberg S.L."/>
            <person name="Sanchez M."/>
            <person name="Sanchez-Ferrero J.C."/>
            <person name="Saunders D."/>
            <person name="Seeger K."/>
            <person name="Squares R."/>
            <person name="Squares S."/>
            <person name="Takeuchi M."/>
            <person name="Tekaia F."/>
            <person name="Turner G."/>
            <person name="Vazquez de Aldana C.R."/>
            <person name="Weidman J."/>
            <person name="White O."/>
            <person name="Woodward J.R."/>
            <person name="Yu J.-H."/>
            <person name="Fraser C.M."/>
            <person name="Galagan J.E."/>
            <person name="Asai K."/>
            <person name="Machida M."/>
            <person name="Hall N."/>
            <person name="Barrell B.G."/>
            <person name="Denning D.W."/>
        </authorList>
    </citation>
    <scope>NUCLEOTIDE SEQUENCE [LARGE SCALE GENOMIC DNA]</scope>
    <source>
        <strain>ATCC MYA-4609 / CBS 101355 / FGSC A1100 / Af293</strain>
    </source>
</reference>
<accession>Q4WUJ6</accession>
<comment type="function">
    <text evidence="1">Involved in pre-mRNA splicing.</text>
</comment>
<comment type="subunit">
    <text evidence="1">Associated with the spliceosome.</text>
</comment>
<comment type="subcellular location">
    <subcellularLocation>
        <location evidence="1">Cytoplasm</location>
    </subcellularLocation>
    <subcellularLocation>
        <location evidence="1">Nucleus</location>
    </subcellularLocation>
</comment>
<comment type="similarity">
    <text evidence="3">Belongs to the ISY1 family.</text>
</comment>
<gene>
    <name type="primary">isy1</name>
    <name type="ORF">AFUA_5G08690</name>
</gene>
<proteinExistence type="inferred from homology"/>
<sequence length="243" mass="27970">MLFRFRAQQAADLGIIDIGRTRRPKAITSVDSIPSCEKWRGQVLKEISRKVSRIQEPSLSDYQIRDLNDEINKLMREKWAWEMQIRNLGGPNYMRGSGRVYDDEGREIPGGGKGYRYFGRARELPGVKEMFEAAARRGRRPPEEEEEEEGKGRGGDIATKKVDANYFGYGLDEEDGSLLAYERQKEKEAVEYLRGQKDSDAEDGWEPLPGDAGDGVEWRLPTLEEVQEELVDRRRRRLLDKIS</sequence>
<feature type="chain" id="PRO_0000192964" description="Pre-mRNA-splicing factor isy1">
    <location>
        <begin position="1"/>
        <end position="243"/>
    </location>
</feature>
<feature type="region of interest" description="Disordered" evidence="2">
    <location>
        <begin position="133"/>
        <end position="157"/>
    </location>
</feature>
<feature type="region of interest" description="Disordered" evidence="2">
    <location>
        <begin position="191"/>
        <end position="216"/>
    </location>
</feature>
<protein>
    <recommendedName>
        <fullName>Pre-mRNA-splicing factor isy1</fullName>
    </recommendedName>
</protein>
<evidence type="ECO:0000250" key="1"/>
<evidence type="ECO:0000256" key="2">
    <source>
        <dbReference type="SAM" id="MobiDB-lite"/>
    </source>
</evidence>
<evidence type="ECO:0000305" key="3"/>
<name>ISY1_ASPFU</name>